<comment type="function">
    <text evidence="1">Plant non-specific lipid-transfer proteins transfer phospholipids as well as galactolipids across membranes. May play a role in wax or cutin deposition in the cell walls of expanding epidermal cells and certain secretory tissues (By similarity).</text>
</comment>
<comment type="mass spectrometry" mass="9646.0" method="MALDI" evidence="2"/>
<comment type="allergen">
    <text evidence="2">Causes an allergic reaction in human. Binds to IgE.</text>
</comment>
<comment type="similarity">
    <text evidence="4">Belongs to the plant LTP family.</text>
</comment>
<reference evidence="4" key="1">
    <citation type="submission" date="2004-08" db="UniProtKB">
        <title>Purification, characterization and molecular cloning of lipid transfer proteins from citrus fruits.</title>
        <authorList>
            <person name="Arhazem O."/>
            <person name="Lopez-Torrejon G."/>
            <person name="Ibanez M.D."/>
            <person name="Lombardero M."/>
            <person name="Sanchez-Monge R."/>
            <person name="Sastre J."/>
            <person name="Barber D."/>
            <person name="Salcedo G."/>
        </authorList>
    </citation>
    <scope>PROTEIN SEQUENCE</scope>
    <scope>MASS SPECTROMETRY</scope>
    <scope>ALLERGEN</scope>
</reference>
<evidence type="ECO:0000250" key="1"/>
<evidence type="ECO:0000269" key="2">
    <source ref="1"/>
</evidence>
<evidence type="ECO:0000303" key="3">
    <source ref="1"/>
</evidence>
<evidence type="ECO:0000305" key="4"/>
<sequence length="20" mass="2096">ITXGQVTGSLAPXIAFLRTK</sequence>
<feature type="chain" id="PRO_0000153871" description="Non-specific lipid-transfer protein">
    <location>
        <begin position="1"/>
        <end position="20" status="greater than"/>
    </location>
</feature>
<feature type="non-terminal residue" evidence="3">
    <location>
        <position position="20"/>
    </location>
</feature>
<proteinExistence type="evidence at protein level"/>
<protein>
    <recommendedName>
        <fullName>Non-specific lipid-transfer protein</fullName>
        <shortName>LTP</shortName>
    </recommendedName>
    <allergenName>Cit s 3.0101</allergenName>
</protein>
<name>NLTP_CITSI</name>
<organism>
    <name type="scientific">Citrus sinensis</name>
    <name type="common">Sweet orange</name>
    <name type="synonym">Citrus aurantium var. sinensis</name>
    <dbReference type="NCBI Taxonomy" id="2711"/>
    <lineage>
        <taxon>Eukaryota</taxon>
        <taxon>Viridiplantae</taxon>
        <taxon>Streptophyta</taxon>
        <taxon>Embryophyta</taxon>
        <taxon>Tracheophyta</taxon>
        <taxon>Spermatophyta</taxon>
        <taxon>Magnoliopsida</taxon>
        <taxon>eudicotyledons</taxon>
        <taxon>Gunneridae</taxon>
        <taxon>Pentapetalae</taxon>
        <taxon>rosids</taxon>
        <taxon>malvids</taxon>
        <taxon>Sapindales</taxon>
        <taxon>Rutaceae</taxon>
        <taxon>Aurantioideae</taxon>
        <taxon>Citrus</taxon>
    </lineage>
</organism>
<dbReference type="Allergome" id="1641">
    <property type="allergen name" value="Cit s 3"/>
</dbReference>
<dbReference type="Allergome" id="1685">
    <property type="allergen name" value="Cit s 3.0101"/>
</dbReference>
<dbReference type="GO" id="GO:0008289">
    <property type="term" value="F:lipid binding"/>
    <property type="evidence" value="ECO:0007669"/>
    <property type="project" value="UniProtKB-KW"/>
</dbReference>
<keyword id="KW-0020">Allergen</keyword>
<keyword id="KW-0903">Direct protein sequencing</keyword>
<keyword id="KW-0446">Lipid-binding</keyword>
<keyword id="KW-0813">Transport</keyword>
<accession>P84161</accession>